<reference key="1">
    <citation type="journal article" date="2015" name="J. Am. Chem. Soc.">
        <title>Efficient biosynthesis of fungal polyketides containing the dioxabicyclo-octane ring system.</title>
        <authorList>
            <person name="Mao X.M."/>
            <person name="Zhan Z.J."/>
            <person name="Grayson M.N."/>
            <person name="Tang M.C."/>
            <person name="Xu W."/>
            <person name="Li Y.Q."/>
            <person name="Yin W.B."/>
            <person name="Lin H.C."/>
            <person name="Chooi Y.H."/>
            <person name="Houk K.N."/>
            <person name="Tang Y."/>
        </authorList>
    </citation>
    <scope>NUCLEOTIDE SEQUENCE [GENOMIC DNA]</scope>
    <scope>FUNCTION</scope>
    <scope>DISRUPTION PHENOTYPE</scope>
    <scope>CATALYTIC ACTIVITY</scope>
    <scope>PATHWAY</scope>
</reference>
<accession>A0A0M4KDW1</accession>
<name>AURB_CALAK</name>
<sequence>MTKESADNYYNPLMLWGYDVFVQVLTNSFWWRCSTKGILVPFFLDNSTTNHMEVGAGTGYFLRAKLDHERSKLKSSDDKTLWPQNLTLVDFHERCMNKAANRISPVRPNRVLANIMEPIPLKGQKFDSIAIMYVLHCIAATPEAKGRVFANLKPFLADEGTLFGSTVLGKGVKHNLIGGFLMWLYNYIGMFDNWDDGKEDFLKPLREHFEVVESEVVGTVLLFKAEKPRH</sequence>
<feature type="chain" id="PRO_0000443966" description="Methyltransferase aurB">
    <location>
        <begin position="1"/>
        <end position="230"/>
    </location>
</feature>
<gene>
    <name evidence="3" type="primary">aurB</name>
</gene>
<comment type="function">
    <text evidence="2">Methyltransferase; part of the gene cluster that mediates the biosynthesis of aurovertins, fungal polyketides that exhibit potent inhibition of adenosine triphosphate synthase (PubMed:26340065). Tha biosynthesis starts with the HR-PKS aurA that selects propionate as the starter unit; synthesizes a hexa-ene chain through the repeated functions of the KR and DH domains in the first six iterations; selectively introduces three alpha-methyl substitutions at C4, C6, and C16 using the S-adensylmethionine-dependent cMET; and shuts off KR and DH in the last three iterations to afford a 1,3,5-triketo portion that can undergo intramolecular cyclization to yield the alpha-pyrone intermediate (PubMed:26340065). AurE may act as a cyclase and enhances the rate of pyrone formation and product release of aurA (PubMed:26340065). The methyltransferase aurB then methylates the C17 hydroxyl group (PubMed:26340065). C17 methylation is required to initiate epoxidation by the downstream monooxygenase aurC (PubMed:26340065). The monooxygenase aurC and the epoxide hydrolase aurD can iteratively transform the terminal triene portion of the methylated precursor into the dioxabicyclo[3.2.1]octane scaffold of aurovertin E. Epoxidation modifications of the precursor occur in two separate steps; bis-epoxidation of the two terminal olefins takes place first, followed by another epoxidation that occurs at C7-C8 after tetrahydrofuran formation (PubMed:26340065). The O-acyltransferase aurG converts aurovertin E to aurovertin A (PubMed:26340065).</text>
</comment>
<comment type="pathway">
    <text evidence="2">Polyketide biosynthesis.</text>
</comment>
<comment type="disruption phenotype">
    <text evidence="2">Blocks the production of aurovertins and accumulates the unmethylated precursor produced by the HR-PKS aurA (PubMed:26340065).</text>
</comment>
<comment type="similarity">
    <text evidence="1">Belongs to the methyltransferase superfamily.</text>
</comment>
<protein>
    <recommendedName>
        <fullName evidence="3">Methyltransferase aurB</fullName>
        <ecNumber evidence="2">2.1.1.-</ecNumber>
    </recommendedName>
    <alternativeName>
        <fullName evidence="3">Aurovertin biosynthesis cluster protein B</fullName>
    </alternativeName>
</protein>
<proteinExistence type="evidence at protein level"/>
<keyword id="KW-0489">Methyltransferase</keyword>
<keyword id="KW-0808">Transferase</keyword>
<evidence type="ECO:0000255" key="1"/>
<evidence type="ECO:0000269" key="2">
    <source>
    </source>
</evidence>
<evidence type="ECO:0000303" key="3">
    <source>
    </source>
</evidence>
<dbReference type="EC" id="2.1.1.-" evidence="2"/>
<dbReference type="EMBL" id="KT581575">
    <property type="protein sequence ID" value="ALD83628.1"/>
    <property type="molecule type" value="Genomic_DNA"/>
</dbReference>
<dbReference type="GO" id="GO:0008168">
    <property type="term" value="F:methyltransferase activity"/>
    <property type="evidence" value="ECO:0007669"/>
    <property type="project" value="UniProtKB-KW"/>
</dbReference>
<dbReference type="GO" id="GO:0032259">
    <property type="term" value="P:methylation"/>
    <property type="evidence" value="ECO:0007669"/>
    <property type="project" value="UniProtKB-KW"/>
</dbReference>
<dbReference type="Gene3D" id="3.40.50.150">
    <property type="entry name" value="Vaccinia Virus protein VP39"/>
    <property type="match status" value="1"/>
</dbReference>
<dbReference type="InterPro" id="IPR013217">
    <property type="entry name" value="Methyltransf_12"/>
</dbReference>
<dbReference type="InterPro" id="IPR029063">
    <property type="entry name" value="SAM-dependent_MTases_sf"/>
</dbReference>
<dbReference type="Pfam" id="PF08242">
    <property type="entry name" value="Methyltransf_12"/>
    <property type="match status" value="1"/>
</dbReference>
<dbReference type="SUPFAM" id="SSF53335">
    <property type="entry name" value="S-adenosyl-L-methionine-dependent methyltransferases"/>
    <property type="match status" value="1"/>
</dbReference>
<organism>
    <name type="scientific">Calcarisporium arbuscula</name>
    <name type="common">Dendryphion arbuscula</name>
    <dbReference type="NCBI Taxonomy" id="240499"/>
    <lineage>
        <taxon>Eukaryota</taxon>
        <taxon>Fungi</taxon>
        <taxon>Dikarya</taxon>
        <taxon>Ascomycota</taxon>
        <taxon>Pezizomycotina</taxon>
        <taxon>Sordariomycetes</taxon>
        <taxon>Hypocreomycetidae</taxon>
        <taxon>Hypocreales</taxon>
        <taxon>Hypocreales incertae sedis</taxon>
        <taxon>Calcarisporium</taxon>
    </lineage>
</organism>